<reference key="1">
    <citation type="journal article" date="1995" name="Nat. Genet.">
        <title>Beta-sarcoglycan (A3b) mutations cause autosomal recessive muscular dystrophy with loss of the sarcoglycan complex.</title>
        <authorList>
            <person name="Boennemann C.G."/>
            <person name="Modi R."/>
            <person name="Noguchi S."/>
            <person name="Mizuno Y."/>
            <person name="Yoshida M."/>
            <person name="Gussoni E."/>
            <person name="McNally E.M."/>
            <person name="Duggan D.J."/>
            <person name="Angelini C."/>
            <person name="Hoffman E.P."/>
            <person name="Ozawa E."/>
            <person name="Kunkel L.M."/>
        </authorList>
    </citation>
    <scope>NUCLEOTIDE SEQUENCE [MRNA]</scope>
    <scope>PROTEIN SEQUENCE OF 161-174</scope>
    <source>
        <tissue>Skeletal muscle</tissue>
    </source>
</reference>
<feature type="chain" id="PRO_0000326144" description="Beta-sarcoglycan">
    <location>
        <begin position="1"/>
        <end position="318"/>
    </location>
</feature>
<feature type="topological domain" description="Cytoplasmic" evidence="2">
    <location>
        <begin position="1"/>
        <end position="65"/>
    </location>
</feature>
<feature type="transmembrane region" description="Helical; Signal-anchor for type II membrane protein" evidence="2">
    <location>
        <begin position="66"/>
        <end position="86"/>
    </location>
</feature>
<feature type="topological domain" description="Extracellular" evidence="2">
    <location>
        <begin position="87"/>
        <end position="318"/>
    </location>
</feature>
<feature type="region of interest" description="Disordered" evidence="3">
    <location>
        <begin position="1"/>
        <end position="32"/>
    </location>
</feature>
<feature type="compositionally biased region" description="Basic and acidic residues" evidence="3">
    <location>
        <begin position="21"/>
        <end position="32"/>
    </location>
</feature>
<feature type="glycosylation site" description="N-linked (GlcNAc...) asparagine" evidence="2">
    <location>
        <position position="158"/>
    </location>
</feature>
<feature type="glycosylation site" description="N-linked (GlcNAc...) asparagine" evidence="2">
    <location>
        <position position="211"/>
    </location>
</feature>
<feature type="glycosylation site" description="N-linked (GlcNAc...) asparagine" evidence="2">
    <location>
        <position position="258"/>
    </location>
</feature>
<feature type="disulfide bond" evidence="2">
    <location>
        <begin position="288"/>
        <end position="314"/>
    </location>
</feature>
<feature type="disulfide bond" evidence="2">
    <location>
        <begin position="290"/>
        <end position="307"/>
    </location>
</feature>
<name>SGCB_RABIT</name>
<sequence length="318" mass="34726">MAAAAAAAAEQQSSNGPVKKSMREKAVERRNVNKEHNSNFKAGYIPIDEDRLHKTGLRGRKGNLAICVIVLLFLLAVINLIITLVIWAVIRIGPNGCDSMEFHESGLLRFKQVSDMGVIHPLYKSTVGGRRNENLVITGNNQPIVFQQGTTKLSVEKNKTSITSDIGMQFFDPRTQNILFSTDYETHEFHLPSGVKSLNVQKASTERITSNATSDLNIKVDGRAIVRGNEGVFIMGKTIEFHMGGNMELKAENSIILNGTVMVSTTRLPSSSSADQLGGGDWVRYKLCMCADGTLFKVQVTGQNVGCQVSDNPCGNTH</sequence>
<dbReference type="EMBL" id="U31117">
    <property type="protein sequence ID" value="AAA87035.1"/>
    <property type="molecule type" value="mRNA"/>
</dbReference>
<dbReference type="RefSeq" id="NP_001075825.1">
    <property type="nucleotide sequence ID" value="NM_001082356.1"/>
</dbReference>
<dbReference type="PDB" id="9C3C">
    <property type="method" value="EM"/>
    <property type="resolution" value="4.30 A"/>
    <property type="chains" value="b=1-318"/>
</dbReference>
<dbReference type="PDBsum" id="9C3C"/>
<dbReference type="EMDB" id="EMD-45165"/>
<dbReference type="SMR" id="Q28635"/>
<dbReference type="CORUM" id="Q28635"/>
<dbReference type="FunCoup" id="Q28635">
    <property type="interactions" value="170"/>
</dbReference>
<dbReference type="STRING" id="9986.ENSOCUP00000030453"/>
<dbReference type="GlyCosmos" id="Q28635">
    <property type="glycosylation" value="3 sites, No reported glycans"/>
</dbReference>
<dbReference type="PaxDb" id="9986-ENSOCUP00000004745"/>
<dbReference type="Ensembl" id="ENSOCUT00000005471.2">
    <property type="protein sequence ID" value="ENSOCUP00000004745.2"/>
    <property type="gene ID" value="ENSOCUG00000005474.4"/>
</dbReference>
<dbReference type="GeneID" id="100009208"/>
<dbReference type="KEGG" id="ocu:100009208"/>
<dbReference type="CTD" id="6443"/>
<dbReference type="eggNOG" id="ENOG502QUW4">
    <property type="taxonomic scope" value="Eukaryota"/>
</dbReference>
<dbReference type="GeneTree" id="ENSGT00390000008110"/>
<dbReference type="HOGENOM" id="CLU_066515_1_0_1"/>
<dbReference type="InParanoid" id="Q28635"/>
<dbReference type="OMA" id="KGVQGME"/>
<dbReference type="OrthoDB" id="660555at2759"/>
<dbReference type="Proteomes" id="UP000001811">
    <property type="component" value="Chromosome 2"/>
</dbReference>
<dbReference type="Bgee" id="ENSOCUG00000005474">
    <property type="expression patterns" value="Expressed in skeletal muscle tissue and 17 other cell types or tissues"/>
</dbReference>
<dbReference type="GO" id="GO:0005737">
    <property type="term" value="C:cytoplasm"/>
    <property type="evidence" value="ECO:0007669"/>
    <property type="project" value="UniProtKB-KW"/>
</dbReference>
<dbReference type="GO" id="GO:0005856">
    <property type="term" value="C:cytoskeleton"/>
    <property type="evidence" value="ECO:0007669"/>
    <property type="project" value="UniProtKB-SubCell"/>
</dbReference>
<dbReference type="GO" id="GO:0016012">
    <property type="term" value="C:sarcoglycan complex"/>
    <property type="evidence" value="ECO:0007669"/>
    <property type="project" value="InterPro"/>
</dbReference>
<dbReference type="GO" id="GO:0042383">
    <property type="term" value="C:sarcolemma"/>
    <property type="evidence" value="ECO:0007669"/>
    <property type="project" value="UniProtKB-SubCell"/>
</dbReference>
<dbReference type="GO" id="GO:0007517">
    <property type="term" value="P:muscle organ development"/>
    <property type="evidence" value="ECO:0007669"/>
    <property type="project" value="InterPro"/>
</dbReference>
<dbReference type="InterPro" id="IPR006875">
    <property type="entry name" value="Sarcoglycan"/>
</dbReference>
<dbReference type="InterPro" id="IPR027659">
    <property type="entry name" value="Sgcb"/>
</dbReference>
<dbReference type="PANTHER" id="PTHR21142:SF2">
    <property type="entry name" value="BETA-SARCOGLYCAN"/>
    <property type="match status" value="1"/>
</dbReference>
<dbReference type="PANTHER" id="PTHR21142">
    <property type="entry name" value="SARCOGLYCANS"/>
    <property type="match status" value="1"/>
</dbReference>
<dbReference type="Pfam" id="PF04790">
    <property type="entry name" value="Sarcoglycan_1"/>
    <property type="match status" value="1"/>
</dbReference>
<organism>
    <name type="scientific">Oryctolagus cuniculus</name>
    <name type="common">Rabbit</name>
    <dbReference type="NCBI Taxonomy" id="9986"/>
    <lineage>
        <taxon>Eukaryota</taxon>
        <taxon>Metazoa</taxon>
        <taxon>Chordata</taxon>
        <taxon>Craniata</taxon>
        <taxon>Vertebrata</taxon>
        <taxon>Euteleostomi</taxon>
        <taxon>Mammalia</taxon>
        <taxon>Eutheria</taxon>
        <taxon>Euarchontoglires</taxon>
        <taxon>Glires</taxon>
        <taxon>Lagomorpha</taxon>
        <taxon>Leporidae</taxon>
        <taxon>Oryctolagus</taxon>
    </lineage>
</organism>
<accession>Q28635</accession>
<proteinExistence type="evidence at protein level"/>
<protein>
    <recommendedName>
        <fullName>Beta-sarcoglycan</fullName>
        <shortName>Beta-SG</shortName>
    </recommendedName>
</protein>
<evidence type="ECO:0000250" key="1"/>
<evidence type="ECO:0000255" key="2"/>
<evidence type="ECO:0000256" key="3">
    <source>
        <dbReference type="SAM" id="MobiDB-lite"/>
    </source>
</evidence>
<evidence type="ECO:0000305" key="4"/>
<comment type="function">
    <text evidence="1">Component of the sarcoglycan complex, a subcomplex of the dystrophin-glycoprotein complex which forms a link between the F-actin cytoskeleton and the extracellular matrix.</text>
</comment>
<comment type="subunit">
    <text evidence="1">Cross-link to form 2 major subcomplexes: one consisting of SGCB, SGCD and SGCG and the other consisting of SGCB and SGCD. The association between SGCB and SGCG is particularly strong while SGCA is loosely associated with the other sarcoglycans (By similarity).</text>
</comment>
<comment type="subcellular location">
    <subcellularLocation>
        <location evidence="1">Cell membrane</location>
        <location evidence="1">Sarcolemma</location>
        <topology evidence="1">Single-pass type II membrane protein</topology>
    </subcellularLocation>
    <subcellularLocation>
        <location evidence="1">Cytoplasm</location>
        <location evidence="1">Cytoskeleton</location>
    </subcellularLocation>
</comment>
<comment type="PTM">
    <text evidence="1">Disulfide bonds are present.</text>
</comment>
<comment type="similarity">
    <text evidence="4">Belongs to the sarcoglycan beta/delta/gamma/zeta family.</text>
</comment>
<gene>
    <name type="primary">SGCB</name>
</gene>
<keyword id="KW-0002">3D-structure</keyword>
<keyword id="KW-1003">Cell membrane</keyword>
<keyword id="KW-0963">Cytoplasm</keyword>
<keyword id="KW-0206">Cytoskeleton</keyword>
<keyword id="KW-0903">Direct protein sequencing</keyword>
<keyword id="KW-1015">Disulfide bond</keyword>
<keyword id="KW-0325">Glycoprotein</keyword>
<keyword id="KW-0472">Membrane</keyword>
<keyword id="KW-1185">Reference proteome</keyword>
<keyword id="KW-0735">Signal-anchor</keyword>
<keyword id="KW-0812">Transmembrane</keyword>
<keyword id="KW-1133">Transmembrane helix</keyword>